<gene>
    <name evidence="1" type="primary">gcvH</name>
    <name type="ordered locus">STH1921</name>
</gene>
<comment type="function">
    <text evidence="1">The glycine cleavage system catalyzes the degradation of glycine. The H protein shuttles the methylamine group of glycine from the P protein to the T protein.</text>
</comment>
<comment type="cofactor">
    <cofactor evidence="1">
        <name>(R)-lipoate</name>
        <dbReference type="ChEBI" id="CHEBI:83088"/>
    </cofactor>
    <text evidence="1">Binds 1 lipoyl cofactor covalently.</text>
</comment>
<comment type="subunit">
    <text evidence="1">The glycine cleavage system is composed of four proteins: P, T, L and H.</text>
</comment>
<comment type="similarity">
    <text evidence="1">Belongs to the GcvH family.</text>
</comment>
<feature type="chain" id="PRO_1000119305" description="Glycine cleavage system H protein">
    <location>
        <begin position="1"/>
        <end position="128"/>
    </location>
</feature>
<feature type="domain" description="Lipoyl-binding" evidence="2">
    <location>
        <begin position="23"/>
        <end position="105"/>
    </location>
</feature>
<feature type="modified residue" description="N6-lipoyllysine" evidence="1">
    <location>
        <position position="64"/>
    </location>
</feature>
<evidence type="ECO:0000255" key="1">
    <source>
        <dbReference type="HAMAP-Rule" id="MF_00272"/>
    </source>
</evidence>
<evidence type="ECO:0000255" key="2">
    <source>
        <dbReference type="PROSITE-ProRule" id="PRU01066"/>
    </source>
</evidence>
<dbReference type="EMBL" id="AP006840">
    <property type="protein sequence ID" value="BAD40906.1"/>
    <property type="molecule type" value="Genomic_DNA"/>
</dbReference>
<dbReference type="RefSeq" id="WP_011196048.1">
    <property type="nucleotide sequence ID" value="NC_006177.1"/>
</dbReference>
<dbReference type="SMR" id="Q67N37"/>
<dbReference type="STRING" id="292459.STH1921"/>
<dbReference type="KEGG" id="sth:STH1921"/>
<dbReference type="eggNOG" id="COG0509">
    <property type="taxonomic scope" value="Bacteria"/>
</dbReference>
<dbReference type="HOGENOM" id="CLU_097408_2_0_9"/>
<dbReference type="OrthoDB" id="9796712at2"/>
<dbReference type="Proteomes" id="UP000000417">
    <property type="component" value="Chromosome"/>
</dbReference>
<dbReference type="GO" id="GO:0005829">
    <property type="term" value="C:cytosol"/>
    <property type="evidence" value="ECO:0007669"/>
    <property type="project" value="TreeGrafter"/>
</dbReference>
<dbReference type="GO" id="GO:0005960">
    <property type="term" value="C:glycine cleavage complex"/>
    <property type="evidence" value="ECO:0007669"/>
    <property type="project" value="InterPro"/>
</dbReference>
<dbReference type="GO" id="GO:0019464">
    <property type="term" value="P:glycine decarboxylation via glycine cleavage system"/>
    <property type="evidence" value="ECO:0007669"/>
    <property type="project" value="UniProtKB-UniRule"/>
</dbReference>
<dbReference type="CDD" id="cd06848">
    <property type="entry name" value="GCS_H"/>
    <property type="match status" value="1"/>
</dbReference>
<dbReference type="Gene3D" id="2.40.50.100">
    <property type="match status" value="1"/>
</dbReference>
<dbReference type="HAMAP" id="MF_00272">
    <property type="entry name" value="GcvH"/>
    <property type="match status" value="1"/>
</dbReference>
<dbReference type="InterPro" id="IPR003016">
    <property type="entry name" value="2-oxoA_DH_lipoyl-BS"/>
</dbReference>
<dbReference type="InterPro" id="IPR000089">
    <property type="entry name" value="Biotin_lipoyl"/>
</dbReference>
<dbReference type="InterPro" id="IPR002930">
    <property type="entry name" value="GCV_H"/>
</dbReference>
<dbReference type="InterPro" id="IPR033753">
    <property type="entry name" value="GCV_H/Fam206"/>
</dbReference>
<dbReference type="InterPro" id="IPR017453">
    <property type="entry name" value="GCV_H_sub"/>
</dbReference>
<dbReference type="InterPro" id="IPR011053">
    <property type="entry name" value="Single_hybrid_motif"/>
</dbReference>
<dbReference type="NCBIfam" id="TIGR00527">
    <property type="entry name" value="gcvH"/>
    <property type="match status" value="1"/>
</dbReference>
<dbReference type="NCBIfam" id="NF002270">
    <property type="entry name" value="PRK01202.1"/>
    <property type="match status" value="1"/>
</dbReference>
<dbReference type="PANTHER" id="PTHR11715">
    <property type="entry name" value="GLYCINE CLEAVAGE SYSTEM H PROTEIN"/>
    <property type="match status" value="1"/>
</dbReference>
<dbReference type="PANTHER" id="PTHR11715:SF3">
    <property type="entry name" value="GLYCINE CLEAVAGE SYSTEM H PROTEIN-RELATED"/>
    <property type="match status" value="1"/>
</dbReference>
<dbReference type="Pfam" id="PF01597">
    <property type="entry name" value="GCV_H"/>
    <property type="match status" value="1"/>
</dbReference>
<dbReference type="SUPFAM" id="SSF51230">
    <property type="entry name" value="Single hybrid motif"/>
    <property type="match status" value="1"/>
</dbReference>
<dbReference type="PROSITE" id="PS50968">
    <property type="entry name" value="BIOTINYL_LIPOYL"/>
    <property type="match status" value="1"/>
</dbReference>
<dbReference type="PROSITE" id="PS00189">
    <property type="entry name" value="LIPOYL"/>
    <property type="match status" value="1"/>
</dbReference>
<reference key="1">
    <citation type="journal article" date="2004" name="Nucleic Acids Res.">
        <title>Genome sequence of Symbiobacterium thermophilum, an uncultivable bacterium that depends on microbial commensalism.</title>
        <authorList>
            <person name="Ueda K."/>
            <person name="Yamashita A."/>
            <person name="Ishikawa J."/>
            <person name="Shimada M."/>
            <person name="Watsuji T."/>
            <person name="Morimura K."/>
            <person name="Ikeda H."/>
            <person name="Hattori M."/>
            <person name="Beppu T."/>
        </authorList>
    </citation>
    <scope>NUCLEOTIDE SEQUENCE [LARGE SCALE GENOMIC DNA]</scope>
    <source>
        <strain>DSM 24528 / JCM 14929 / IAM 14863 / T</strain>
    </source>
</reference>
<accession>Q67N37</accession>
<sequence>MANVPADLKYSKEHEWIRVEGNIGIVGITWFAQDQLGDVVFVELPEVGRELKQNEQFGVVESVKTVSDLYCPASGKVVEVNTKLESSPELINQDPYGEGWILKLELSNPAELDNLLDAAAYDAFTKEG</sequence>
<name>GCSH_SYMTH</name>
<organism>
    <name type="scientific">Symbiobacterium thermophilum (strain DSM 24528 / JCM 14929 / IAM 14863 / T)</name>
    <dbReference type="NCBI Taxonomy" id="292459"/>
    <lineage>
        <taxon>Bacteria</taxon>
        <taxon>Bacillati</taxon>
        <taxon>Bacillota</taxon>
        <taxon>Clostridia</taxon>
        <taxon>Eubacteriales</taxon>
        <taxon>Symbiobacteriaceae</taxon>
        <taxon>Symbiobacterium</taxon>
    </lineage>
</organism>
<proteinExistence type="inferred from homology"/>
<keyword id="KW-0450">Lipoyl</keyword>
<keyword id="KW-1185">Reference proteome</keyword>
<protein>
    <recommendedName>
        <fullName evidence="1">Glycine cleavage system H protein</fullName>
    </recommendedName>
</protein>